<proteinExistence type="evidence at transcript level"/>
<sequence length="88" mass="9206">MKKTALLAALCSVVSLSSCCRIVDCCFEDPCAPIQCSPCESKKKDVDGGCNSCNGYVPACKPCGGDTHQDAKHGPQARGIPVDGKCRQ</sequence>
<evidence type="ECO:0000250" key="1"/>
<evidence type="ECO:0000255" key="2">
    <source>
        <dbReference type="PROSITE-ProRule" id="PRU00303"/>
    </source>
</evidence>
<evidence type="ECO:0000305" key="3"/>
<dbReference type="EMBL" id="X54451">
    <property type="protein sequence ID" value="CAA38318.1"/>
    <property type="molecule type" value="Genomic_DNA"/>
</dbReference>
<dbReference type="EMBL" id="M85196">
    <property type="protein sequence ID" value="AAA23153.1"/>
    <property type="molecule type" value="Genomic_DNA"/>
</dbReference>
<dbReference type="EMBL" id="M85197">
    <property type="protein sequence ID" value="AAA23158.1"/>
    <property type="molecule type" value="Genomic_DNA"/>
</dbReference>
<dbReference type="EMBL" id="AE001273">
    <property type="protein sequence ID" value="AAC68043.1"/>
    <property type="molecule type" value="Genomic_DNA"/>
</dbReference>
<dbReference type="PIR" id="E71513">
    <property type="entry name" value="E71513"/>
</dbReference>
<dbReference type="PIR" id="S12126">
    <property type="entry name" value="S12126"/>
</dbReference>
<dbReference type="RefSeq" id="NP_219956.1">
    <property type="nucleotide sequence ID" value="NC_000117.1"/>
</dbReference>
<dbReference type="RefSeq" id="WP_009871799.1">
    <property type="nucleotide sequence ID" value="NC_000117.1"/>
</dbReference>
<dbReference type="STRING" id="272561.CT_444"/>
<dbReference type="TCDB" id="1.B.2.1.2">
    <property type="family name" value="the chlamydial porin (cp) family"/>
</dbReference>
<dbReference type="EnsemblBacteria" id="AAC68043">
    <property type="protein sequence ID" value="AAC68043"/>
    <property type="gene ID" value="CT_444"/>
</dbReference>
<dbReference type="GeneID" id="884216"/>
<dbReference type="KEGG" id="ctr:CT_444"/>
<dbReference type="PATRIC" id="fig|272561.5.peg.479"/>
<dbReference type="HOGENOM" id="CLU_2463467_0_0_0"/>
<dbReference type="InParanoid" id="P0CC05"/>
<dbReference type="OrthoDB" id="18978at2"/>
<dbReference type="Proteomes" id="UP000000431">
    <property type="component" value="Chromosome"/>
</dbReference>
<dbReference type="GO" id="GO:0009279">
    <property type="term" value="C:cell outer membrane"/>
    <property type="evidence" value="ECO:0007669"/>
    <property type="project" value="UniProtKB-SubCell"/>
</dbReference>
<dbReference type="GO" id="GO:0005201">
    <property type="term" value="F:extracellular matrix structural constituent"/>
    <property type="evidence" value="ECO:0007669"/>
    <property type="project" value="InterPro"/>
</dbReference>
<dbReference type="GO" id="GO:0008360">
    <property type="term" value="P:regulation of cell shape"/>
    <property type="evidence" value="ECO:0007669"/>
    <property type="project" value="UniProtKB-KW"/>
</dbReference>
<dbReference type="InterPro" id="IPR003517">
    <property type="entry name" value="Cys-rich_OMP3_Chlamydia"/>
</dbReference>
<dbReference type="Pfam" id="PF03503">
    <property type="entry name" value="Chlam_OMP3"/>
    <property type="match status" value="1"/>
</dbReference>
<dbReference type="PRINTS" id="PR01335">
    <property type="entry name" value="CHLAMIDIAOM3"/>
</dbReference>
<dbReference type="PROSITE" id="PS51257">
    <property type="entry name" value="PROKAR_LIPOPROTEIN"/>
    <property type="match status" value="1"/>
</dbReference>
<feature type="signal peptide" evidence="2">
    <location>
        <begin position="1"/>
        <end position="18"/>
    </location>
</feature>
<feature type="chain" id="PRO_0000018158" description="Small cysteine-rich outer membrane protein OmcA">
    <location>
        <begin position="19"/>
        <end position="88"/>
    </location>
</feature>
<feature type="lipid moiety-binding region" description="N-palmitoyl cysteine" evidence="3">
    <location>
        <position position="19"/>
    </location>
</feature>
<feature type="lipid moiety-binding region" description="S-diacylglycerol cysteine" evidence="3">
    <location>
        <position position="19"/>
    </location>
</feature>
<feature type="sequence conflict" description="In Ref. 1; CAA38318." evidence="3" ref="1">
    <original>A</original>
    <variation>R</variation>
    <location>
        <position position="32"/>
    </location>
</feature>
<reference key="1">
    <citation type="journal article" date="1990" name="Mol. Microbiol.">
        <title>Cysteine-rich outer membrane proteins of Chlamydia trachomatis display compensatory sequence changes between biovariants.</title>
        <authorList>
            <person name="Allen J.E."/>
            <person name="Cerrone M.C."/>
            <person name="Beatty P.R."/>
            <person name="Stephens R.S."/>
        </authorList>
    </citation>
    <scope>NUCLEOTIDE SEQUENCE [GENOMIC DNA]</scope>
    <source>
        <strain>B/Tw-5/OT</strain>
    </source>
</reference>
<reference key="2">
    <citation type="submission" date="1992-02" db="EMBL/GenBank/DDBJ databases">
        <title>The nucleotide sequences of 10 and 60 kDa cysteine-rich outer membrane protein genes of Chlamydia trachomatis serovar F.</title>
        <authorList>
            <person name="Zhang Y.-X."/>
            <person name="Caldwell H.D."/>
        </authorList>
    </citation>
    <scope>NUCLEOTIDE SEQUENCE [GENOMIC DNA]</scope>
    <source>
        <strain>C/TW-3</strain>
        <strain>F/IC-Cal-13</strain>
    </source>
</reference>
<reference key="3">
    <citation type="journal article" date="1998" name="Science">
        <title>Genome sequence of an obligate intracellular pathogen of humans: Chlamydia trachomatis.</title>
        <authorList>
            <person name="Stephens R.S."/>
            <person name="Kalman S."/>
            <person name="Lammel C.J."/>
            <person name="Fan J."/>
            <person name="Marathe R."/>
            <person name="Aravind L."/>
            <person name="Mitchell W.P."/>
            <person name="Olinger L."/>
            <person name="Tatusov R.L."/>
            <person name="Zhao Q."/>
            <person name="Koonin E.V."/>
            <person name="Davis R.W."/>
        </authorList>
    </citation>
    <scope>NUCLEOTIDE SEQUENCE [LARGE SCALE GENOMIC DNA]</scope>
    <source>
        <strain>ATCC VR-885 / DSM 19411 / UW-3/Cx</strain>
    </source>
</reference>
<name>OMCA_CHLTR</name>
<comment type="function">
    <text evidence="1">In elementary bodies (EBs, the infectious stage, which is able to survive outside the host cell) provides the structural integrity of the outer envelope through disulfide cross-links with the large cysteine-rich periplasmic protein and the major outer membrane porin. It has been described in publications as the Sarkosyl-insoluble COMC (Chlamydia outer membrane complex), and serves as the functional equivalent of peptidoglycan (By similarity).</text>
</comment>
<comment type="subunit">
    <text evidence="1">Part of a disulfide cross-linked outer membrane complex (COMC) composed of the major outer membrane porin (MOMP), the small cysteine-rich protein (OmcA) and the large cysteine-rich periplasmic protein (OmcB).</text>
</comment>
<comment type="subcellular location">
    <subcellularLocation>
        <location evidence="3">Cell outer membrane</location>
        <topology evidence="2">Lipid-anchor</topology>
    </subcellularLocation>
    <text>The protein moiety probably penetrates into the periplasm.</text>
</comment>
<comment type="developmental stage">
    <text>It is present but the disulfide bonds are reduced in reticulate bodies (RBs).</text>
</comment>
<accession>P0CC05</accession>
<accession>P21355</accession>
<accession>Q57433</accession>
<keyword id="KW-0998">Cell outer membrane</keyword>
<keyword id="KW-0133">Cell shape</keyword>
<keyword id="KW-1015">Disulfide bond</keyword>
<keyword id="KW-0449">Lipoprotein</keyword>
<keyword id="KW-0472">Membrane</keyword>
<keyword id="KW-0564">Palmitate</keyword>
<keyword id="KW-1185">Reference proteome</keyword>
<keyword id="KW-0732">Signal</keyword>
<gene>
    <name type="primary">omcA</name>
    <name type="synonym">omp2A</name>
    <name type="synonym">omp3</name>
    <name type="ordered locus">CT_444</name>
</gene>
<protein>
    <recommendedName>
        <fullName>Small cysteine-rich outer membrane protein OmcA</fullName>
        <shortName>Small-CRP</shortName>
    </recommendedName>
    <alternativeName>
        <fullName>9 kDa cysteine-rich lipoprotein</fullName>
        <shortName>9kDa-CRP</shortName>
    </alternativeName>
</protein>
<organism>
    <name type="scientific">Chlamydia trachomatis serovar D (strain ATCC VR-885 / DSM 19411 / UW-3/Cx)</name>
    <dbReference type="NCBI Taxonomy" id="272561"/>
    <lineage>
        <taxon>Bacteria</taxon>
        <taxon>Pseudomonadati</taxon>
        <taxon>Chlamydiota</taxon>
        <taxon>Chlamydiia</taxon>
        <taxon>Chlamydiales</taxon>
        <taxon>Chlamydiaceae</taxon>
        <taxon>Chlamydia/Chlamydophila group</taxon>
        <taxon>Chlamydia</taxon>
    </lineage>
</organism>